<dbReference type="EC" id="6.1.1.15" evidence="1"/>
<dbReference type="EMBL" id="CP000911">
    <property type="protein sequence ID" value="ABY37929.1"/>
    <property type="molecule type" value="Genomic_DNA"/>
</dbReference>
<dbReference type="RefSeq" id="WP_006072570.1">
    <property type="nucleotide sequence ID" value="NC_010169.1"/>
</dbReference>
<dbReference type="SMR" id="B0CLE9"/>
<dbReference type="GeneID" id="97533873"/>
<dbReference type="KEGG" id="bmt:BSUIS_A0861"/>
<dbReference type="HOGENOM" id="CLU_016739_4_2_5"/>
<dbReference type="Proteomes" id="UP000008545">
    <property type="component" value="Chromosome I"/>
</dbReference>
<dbReference type="GO" id="GO:0005829">
    <property type="term" value="C:cytosol"/>
    <property type="evidence" value="ECO:0007669"/>
    <property type="project" value="TreeGrafter"/>
</dbReference>
<dbReference type="GO" id="GO:0005524">
    <property type="term" value="F:ATP binding"/>
    <property type="evidence" value="ECO:0007669"/>
    <property type="project" value="UniProtKB-UniRule"/>
</dbReference>
<dbReference type="GO" id="GO:0004827">
    <property type="term" value="F:proline-tRNA ligase activity"/>
    <property type="evidence" value="ECO:0007669"/>
    <property type="project" value="UniProtKB-UniRule"/>
</dbReference>
<dbReference type="GO" id="GO:0006433">
    <property type="term" value="P:prolyl-tRNA aminoacylation"/>
    <property type="evidence" value="ECO:0007669"/>
    <property type="project" value="UniProtKB-UniRule"/>
</dbReference>
<dbReference type="CDD" id="cd00861">
    <property type="entry name" value="ProRS_anticodon_short"/>
    <property type="match status" value="1"/>
</dbReference>
<dbReference type="CDD" id="cd00779">
    <property type="entry name" value="ProRS_core_prok"/>
    <property type="match status" value="1"/>
</dbReference>
<dbReference type="FunFam" id="3.30.930.10:FF:000042">
    <property type="entry name" value="probable proline--tRNA ligase, mitochondrial"/>
    <property type="match status" value="1"/>
</dbReference>
<dbReference type="FunFam" id="3.40.50.800:FF:000032">
    <property type="entry name" value="Proline--tRNA ligase"/>
    <property type="match status" value="1"/>
</dbReference>
<dbReference type="Gene3D" id="3.40.50.800">
    <property type="entry name" value="Anticodon-binding domain"/>
    <property type="match status" value="1"/>
</dbReference>
<dbReference type="Gene3D" id="3.30.930.10">
    <property type="entry name" value="Bira Bifunctional Protein, Domain 2"/>
    <property type="match status" value="1"/>
</dbReference>
<dbReference type="HAMAP" id="MF_01570">
    <property type="entry name" value="Pro_tRNA_synth_type2"/>
    <property type="match status" value="1"/>
</dbReference>
<dbReference type="InterPro" id="IPR002314">
    <property type="entry name" value="aa-tRNA-synt_IIb"/>
</dbReference>
<dbReference type="InterPro" id="IPR006195">
    <property type="entry name" value="aa-tRNA-synth_II"/>
</dbReference>
<dbReference type="InterPro" id="IPR045864">
    <property type="entry name" value="aa-tRNA-synth_II/BPL/LPL"/>
</dbReference>
<dbReference type="InterPro" id="IPR004154">
    <property type="entry name" value="Anticodon-bd"/>
</dbReference>
<dbReference type="InterPro" id="IPR036621">
    <property type="entry name" value="Anticodon-bd_dom_sf"/>
</dbReference>
<dbReference type="InterPro" id="IPR002316">
    <property type="entry name" value="Pro-tRNA-ligase_IIa"/>
</dbReference>
<dbReference type="InterPro" id="IPR004500">
    <property type="entry name" value="Pro-tRNA-synth_IIa_bac-type"/>
</dbReference>
<dbReference type="InterPro" id="IPR050062">
    <property type="entry name" value="Pro-tRNA_synthetase"/>
</dbReference>
<dbReference type="InterPro" id="IPR023716">
    <property type="entry name" value="Prolyl-tRNA_ligase_IIa_type2"/>
</dbReference>
<dbReference type="InterPro" id="IPR044140">
    <property type="entry name" value="ProRS_anticodon_short"/>
</dbReference>
<dbReference type="InterPro" id="IPR033730">
    <property type="entry name" value="ProRS_core_prok"/>
</dbReference>
<dbReference type="NCBIfam" id="NF008979">
    <property type="entry name" value="PRK12325.1"/>
    <property type="match status" value="1"/>
</dbReference>
<dbReference type="NCBIfam" id="TIGR00409">
    <property type="entry name" value="proS_fam_II"/>
    <property type="match status" value="1"/>
</dbReference>
<dbReference type="PANTHER" id="PTHR42753">
    <property type="entry name" value="MITOCHONDRIAL RIBOSOME PROTEIN L39/PROLYL-TRNA LIGASE FAMILY MEMBER"/>
    <property type="match status" value="1"/>
</dbReference>
<dbReference type="PANTHER" id="PTHR42753:SF2">
    <property type="entry name" value="PROLINE--TRNA LIGASE"/>
    <property type="match status" value="1"/>
</dbReference>
<dbReference type="Pfam" id="PF03129">
    <property type="entry name" value="HGTP_anticodon"/>
    <property type="match status" value="1"/>
</dbReference>
<dbReference type="Pfam" id="PF00587">
    <property type="entry name" value="tRNA-synt_2b"/>
    <property type="match status" value="1"/>
</dbReference>
<dbReference type="PRINTS" id="PR01046">
    <property type="entry name" value="TRNASYNTHPRO"/>
</dbReference>
<dbReference type="SUPFAM" id="SSF52954">
    <property type="entry name" value="Class II aaRS ABD-related"/>
    <property type="match status" value="1"/>
</dbReference>
<dbReference type="SUPFAM" id="SSF55681">
    <property type="entry name" value="Class II aaRS and biotin synthetases"/>
    <property type="match status" value="1"/>
</dbReference>
<dbReference type="PROSITE" id="PS50862">
    <property type="entry name" value="AA_TRNA_LIGASE_II"/>
    <property type="match status" value="1"/>
</dbReference>
<accession>B0CLE9</accession>
<name>SYP_BRUSI</name>
<sequence length="442" mass="49478">MRLSRYFLPILKENPKEAEIVSHRLMLRSGMIRQQSAGIYSWLPIGLKVLNKVCTIIREEQNRAGANEILMPTIQSADLWRESGRYDAYGKEMLRIQDRQEREMLFGPTNEEMVTDIFRSYVRSYKDLPLNLYHIQWKFRDEVRPRFGVMRSREFLMKDAYSFDLDYEGAKMAYYRMFVSYLRTFARVGLQAIPMRADTGPIGGDLSHEFIILAETGESQVYCDRAYLDLAVPGADTDFRNDAQLTDIVTRWTTPYAATDEMHDEADWAKVKPESQVSARGIEVGHIFHFGTKYSEPMGAKVQGPDGKEHLVSMGSYGIGPSRLVAAAIEASHDDAGIIWPKAIAPFGAGIVNMKPGDEGCDGVSEKLYEALTNAGVDPLLDDKDERPGAKFATMDLIGLPTQVIVGPRGVAAGEVEVKDRKTGERQSLGIEAAINMLTAQA</sequence>
<organism>
    <name type="scientific">Brucella suis (strain ATCC 23445 / NCTC 10510)</name>
    <dbReference type="NCBI Taxonomy" id="470137"/>
    <lineage>
        <taxon>Bacteria</taxon>
        <taxon>Pseudomonadati</taxon>
        <taxon>Pseudomonadota</taxon>
        <taxon>Alphaproteobacteria</taxon>
        <taxon>Hyphomicrobiales</taxon>
        <taxon>Brucellaceae</taxon>
        <taxon>Brucella/Ochrobactrum group</taxon>
        <taxon>Brucella</taxon>
    </lineage>
</organism>
<reference key="1">
    <citation type="submission" date="2007-12" db="EMBL/GenBank/DDBJ databases">
        <title>Brucella suis ATCC 23445 whole genome shotgun sequencing project.</title>
        <authorList>
            <person name="Setubal J.C."/>
            <person name="Bowns C."/>
            <person name="Boyle S."/>
            <person name="Crasta O.R."/>
            <person name="Czar M.J."/>
            <person name="Dharmanolla C."/>
            <person name="Gillespie J.J."/>
            <person name="Kenyon R.W."/>
            <person name="Lu J."/>
            <person name="Mane S."/>
            <person name="Mohapatra S."/>
            <person name="Nagrani S."/>
            <person name="Purkayastha A."/>
            <person name="Rajasimha H.K."/>
            <person name="Shallom J.M."/>
            <person name="Shallom S."/>
            <person name="Shukla M."/>
            <person name="Snyder E.E."/>
            <person name="Sobral B.W."/>
            <person name="Wattam A.R."/>
            <person name="Will R."/>
            <person name="Williams K."/>
            <person name="Yoo H."/>
            <person name="Bruce D."/>
            <person name="Detter C."/>
            <person name="Munk C."/>
            <person name="Brettin T.S."/>
        </authorList>
    </citation>
    <scope>NUCLEOTIDE SEQUENCE [LARGE SCALE GENOMIC DNA]</scope>
    <source>
        <strain>ATCC 23445 / NCTC 10510</strain>
    </source>
</reference>
<evidence type="ECO:0000255" key="1">
    <source>
        <dbReference type="HAMAP-Rule" id="MF_01570"/>
    </source>
</evidence>
<feature type="chain" id="PRO_1000087862" description="Proline--tRNA ligase">
    <location>
        <begin position="1"/>
        <end position="442"/>
    </location>
</feature>
<comment type="function">
    <text evidence="1">Catalyzes the attachment of proline to tRNA(Pro) in a two-step reaction: proline is first activated by ATP to form Pro-AMP and then transferred to the acceptor end of tRNA(Pro).</text>
</comment>
<comment type="catalytic activity">
    <reaction evidence="1">
        <text>tRNA(Pro) + L-proline + ATP = L-prolyl-tRNA(Pro) + AMP + diphosphate</text>
        <dbReference type="Rhea" id="RHEA:14305"/>
        <dbReference type="Rhea" id="RHEA-COMP:9700"/>
        <dbReference type="Rhea" id="RHEA-COMP:9702"/>
        <dbReference type="ChEBI" id="CHEBI:30616"/>
        <dbReference type="ChEBI" id="CHEBI:33019"/>
        <dbReference type="ChEBI" id="CHEBI:60039"/>
        <dbReference type="ChEBI" id="CHEBI:78442"/>
        <dbReference type="ChEBI" id="CHEBI:78532"/>
        <dbReference type="ChEBI" id="CHEBI:456215"/>
        <dbReference type="EC" id="6.1.1.15"/>
    </reaction>
</comment>
<comment type="subunit">
    <text evidence="1">Homodimer.</text>
</comment>
<comment type="subcellular location">
    <subcellularLocation>
        <location evidence="1">Cytoplasm</location>
    </subcellularLocation>
</comment>
<comment type="similarity">
    <text evidence="1">Belongs to the class-II aminoacyl-tRNA synthetase family. ProS type 2 subfamily.</text>
</comment>
<protein>
    <recommendedName>
        <fullName evidence="1">Proline--tRNA ligase</fullName>
        <ecNumber evidence="1">6.1.1.15</ecNumber>
    </recommendedName>
    <alternativeName>
        <fullName evidence="1">Prolyl-tRNA synthetase</fullName>
        <shortName evidence="1">ProRS</shortName>
    </alternativeName>
</protein>
<proteinExistence type="inferred from homology"/>
<gene>
    <name evidence="1" type="primary">proS</name>
    <name type="ordered locus">BSUIS_A0861</name>
</gene>
<keyword id="KW-0030">Aminoacyl-tRNA synthetase</keyword>
<keyword id="KW-0067">ATP-binding</keyword>
<keyword id="KW-0963">Cytoplasm</keyword>
<keyword id="KW-0436">Ligase</keyword>
<keyword id="KW-0547">Nucleotide-binding</keyword>
<keyword id="KW-0648">Protein biosynthesis</keyword>